<feature type="signal peptide" evidence="3">
    <location>
        <begin position="1"/>
        <end position="31"/>
    </location>
</feature>
<feature type="chain" id="PRO_0000011829" description="Probable xyloglucan endotransglucosylase/hydrolase protein 29">
    <location>
        <begin position="32"/>
        <end position="357"/>
    </location>
</feature>
<feature type="domain" description="GH16" evidence="4">
    <location>
        <begin position="32"/>
        <end position="232"/>
    </location>
</feature>
<feature type="region of interest" description="Disordered" evidence="5">
    <location>
        <begin position="326"/>
        <end position="357"/>
    </location>
</feature>
<feature type="compositionally biased region" description="Basic residues" evidence="5">
    <location>
        <begin position="335"/>
        <end position="348"/>
    </location>
</feature>
<feature type="active site" description="Nucleophile" evidence="2">
    <location>
        <position position="117"/>
    </location>
</feature>
<feature type="active site" description="Proton donor" evidence="2">
    <location>
        <position position="121"/>
    </location>
</feature>
<feature type="binding site" evidence="2">
    <location>
        <position position="121"/>
    </location>
    <ligand>
        <name>xyloglucan</name>
        <dbReference type="ChEBI" id="CHEBI:18233"/>
    </ligand>
</feature>
<feature type="binding site" evidence="2">
    <location>
        <begin position="134"/>
        <end position="136"/>
    </location>
    <ligand>
        <name>xyloglucan</name>
        <dbReference type="ChEBI" id="CHEBI:18233"/>
    </ligand>
</feature>
<feature type="binding site" evidence="2">
    <location>
        <begin position="144"/>
        <end position="148"/>
    </location>
    <ligand>
        <name>xyloglucan</name>
        <dbReference type="ChEBI" id="CHEBI:18233"/>
    </ligand>
</feature>
<feature type="binding site" evidence="2">
    <location>
        <begin position="211"/>
        <end position="212"/>
    </location>
    <ligand>
        <name>xyloglucan</name>
        <dbReference type="ChEBI" id="CHEBI:18233"/>
    </ligand>
</feature>
<feature type="binding site" evidence="2">
    <location>
        <position position="216"/>
    </location>
    <ligand>
        <name>xyloglucan</name>
        <dbReference type="ChEBI" id="CHEBI:18233"/>
    </ligand>
</feature>
<feature type="binding site" evidence="2">
    <location>
        <position position="304"/>
    </location>
    <ligand>
        <name>xyloglucan</name>
        <dbReference type="ChEBI" id="CHEBI:18233"/>
    </ligand>
</feature>
<feature type="site" description="Important for catalytic activity" evidence="2">
    <location>
        <position position="119"/>
    </location>
</feature>
<feature type="glycosylation site" description="N-linked (GlcNAc...) asparagine" evidence="3">
    <location>
        <position position="140"/>
    </location>
</feature>
<feature type="glycosylation site" description="N-linked (GlcNAc...) asparagine" evidence="3">
    <location>
        <position position="241"/>
    </location>
</feature>
<feature type="glycosylation site" description="N-linked (GlcNAc...) asparagine" evidence="3">
    <location>
        <position position="262"/>
    </location>
</feature>
<feature type="glycosylation site" description="N-linked (GlcNAc...) asparagine" evidence="3">
    <location>
        <position position="347"/>
    </location>
</feature>
<feature type="disulfide bond" evidence="2">
    <location>
        <begin position="299"/>
        <end position="312"/>
    </location>
</feature>
<protein>
    <recommendedName>
        <fullName>Probable xyloglucan endotransglucosylase/hydrolase protein 29</fullName>
        <shortName>At-XTH29</shortName>
        <shortName>XTH-29</shortName>
        <ecNumber>2.4.1.207</ecNumber>
    </recommendedName>
</protein>
<name>XTH29_ARATH</name>
<keyword id="KW-0052">Apoplast</keyword>
<keyword id="KW-0134">Cell wall</keyword>
<keyword id="KW-0961">Cell wall biogenesis/degradation</keyword>
<keyword id="KW-1015">Disulfide bond</keyword>
<keyword id="KW-0325">Glycoprotein</keyword>
<keyword id="KW-0326">Glycosidase</keyword>
<keyword id="KW-0378">Hydrolase</keyword>
<keyword id="KW-1185">Reference proteome</keyword>
<keyword id="KW-0964">Secreted</keyword>
<keyword id="KW-0732">Signal</keyword>
<keyword id="KW-0808">Transferase</keyword>
<evidence type="ECO:0000250" key="1"/>
<evidence type="ECO:0000250" key="2">
    <source>
        <dbReference type="UniProtKB" id="Q8GZD5"/>
    </source>
</evidence>
<evidence type="ECO:0000255" key="3"/>
<evidence type="ECO:0000255" key="4">
    <source>
        <dbReference type="PROSITE-ProRule" id="PRU01098"/>
    </source>
</evidence>
<evidence type="ECO:0000256" key="5">
    <source>
        <dbReference type="SAM" id="MobiDB-lite"/>
    </source>
</evidence>
<evidence type="ECO:0000305" key="6"/>
<reference key="1">
    <citation type="journal article" date="1999" name="Nature">
        <title>Sequence and analysis of chromosome 4 of the plant Arabidopsis thaliana.</title>
        <authorList>
            <person name="Mayer K.F.X."/>
            <person name="Schueller C."/>
            <person name="Wambutt R."/>
            <person name="Murphy G."/>
            <person name="Volckaert G."/>
            <person name="Pohl T."/>
            <person name="Duesterhoeft A."/>
            <person name="Stiekema W."/>
            <person name="Entian K.-D."/>
            <person name="Terryn N."/>
            <person name="Harris B."/>
            <person name="Ansorge W."/>
            <person name="Brandt P."/>
            <person name="Grivell L.A."/>
            <person name="Rieger M."/>
            <person name="Weichselgartner M."/>
            <person name="de Simone V."/>
            <person name="Obermaier B."/>
            <person name="Mache R."/>
            <person name="Mueller M."/>
            <person name="Kreis M."/>
            <person name="Delseny M."/>
            <person name="Puigdomenech P."/>
            <person name="Watson M."/>
            <person name="Schmidtheini T."/>
            <person name="Reichert B."/>
            <person name="Portetelle D."/>
            <person name="Perez-Alonso M."/>
            <person name="Boutry M."/>
            <person name="Bancroft I."/>
            <person name="Vos P."/>
            <person name="Hoheisel J."/>
            <person name="Zimmermann W."/>
            <person name="Wedler H."/>
            <person name="Ridley P."/>
            <person name="Langham S.-A."/>
            <person name="McCullagh B."/>
            <person name="Bilham L."/>
            <person name="Robben J."/>
            <person name="van der Schueren J."/>
            <person name="Grymonprez B."/>
            <person name="Chuang Y.-J."/>
            <person name="Vandenbussche F."/>
            <person name="Braeken M."/>
            <person name="Weltjens I."/>
            <person name="Voet M."/>
            <person name="Bastiaens I."/>
            <person name="Aert R."/>
            <person name="Defoor E."/>
            <person name="Weitzenegger T."/>
            <person name="Bothe G."/>
            <person name="Ramsperger U."/>
            <person name="Hilbert H."/>
            <person name="Braun M."/>
            <person name="Holzer E."/>
            <person name="Brandt A."/>
            <person name="Peters S."/>
            <person name="van Staveren M."/>
            <person name="Dirkse W."/>
            <person name="Mooijman P."/>
            <person name="Klein Lankhorst R."/>
            <person name="Rose M."/>
            <person name="Hauf J."/>
            <person name="Koetter P."/>
            <person name="Berneiser S."/>
            <person name="Hempel S."/>
            <person name="Feldpausch M."/>
            <person name="Lamberth S."/>
            <person name="Van den Daele H."/>
            <person name="De Keyser A."/>
            <person name="Buysshaert C."/>
            <person name="Gielen J."/>
            <person name="Villarroel R."/>
            <person name="De Clercq R."/>
            <person name="van Montagu M."/>
            <person name="Rogers J."/>
            <person name="Cronin A."/>
            <person name="Quail M.A."/>
            <person name="Bray-Allen S."/>
            <person name="Clark L."/>
            <person name="Doggett J."/>
            <person name="Hall S."/>
            <person name="Kay M."/>
            <person name="Lennard N."/>
            <person name="McLay K."/>
            <person name="Mayes R."/>
            <person name="Pettett A."/>
            <person name="Rajandream M.A."/>
            <person name="Lyne M."/>
            <person name="Benes V."/>
            <person name="Rechmann S."/>
            <person name="Borkova D."/>
            <person name="Bloecker H."/>
            <person name="Scharfe M."/>
            <person name="Grimm M."/>
            <person name="Loehnert T.-H."/>
            <person name="Dose S."/>
            <person name="de Haan M."/>
            <person name="Maarse A.C."/>
            <person name="Schaefer M."/>
            <person name="Mueller-Auer S."/>
            <person name="Gabel C."/>
            <person name="Fuchs M."/>
            <person name="Fartmann B."/>
            <person name="Granderath K."/>
            <person name="Dauner D."/>
            <person name="Herzl A."/>
            <person name="Neumann S."/>
            <person name="Argiriou A."/>
            <person name="Vitale D."/>
            <person name="Liguori R."/>
            <person name="Piravandi E."/>
            <person name="Massenet O."/>
            <person name="Quigley F."/>
            <person name="Clabauld G."/>
            <person name="Muendlein A."/>
            <person name="Felber R."/>
            <person name="Schnabl S."/>
            <person name="Hiller R."/>
            <person name="Schmidt W."/>
            <person name="Lecharny A."/>
            <person name="Aubourg S."/>
            <person name="Chefdor F."/>
            <person name="Cooke R."/>
            <person name="Berger C."/>
            <person name="Monfort A."/>
            <person name="Casacuberta E."/>
            <person name="Gibbons T."/>
            <person name="Weber N."/>
            <person name="Vandenbol M."/>
            <person name="Bargues M."/>
            <person name="Terol J."/>
            <person name="Torres A."/>
            <person name="Perez-Perez A."/>
            <person name="Purnelle B."/>
            <person name="Bent E."/>
            <person name="Johnson S."/>
            <person name="Tacon D."/>
            <person name="Jesse T."/>
            <person name="Heijnen L."/>
            <person name="Schwarz S."/>
            <person name="Scholler P."/>
            <person name="Heber S."/>
            <person name="Francs P."/>
            <person name="Bielke C."/>
            <person name="Frishman D."/>
            <person name="Haase D."/>
            <person name="Lemcke K."/>
            <person name="Mewes H.-W."/>
            <person name="Stocker S."/>
            <person name="Zaccaria P."/>
            <person name="Bevan M."/>
            <person name="Wilson R.K."/>
            <person name="de la Bastide M."/>
            <person name="Habermann K."/>
            <person name="Parnell L."/>
            <person name="Dedhia N."/>
            <person name="Gnoj L."/>
            <person name="Schutz K."/>
            <person name="Huang E."/>
            <person name="Spiegel L."/>
            <person name="Sekhon M."/>
            <person name="Murray J."/>
            <person name="Sheet P."/>
            <person name="Cordes M."/>
            <person name="Abu-Threideh J."/>
            <person name="Stoneking T."/>
            <person name="Kalicki J."/>
            <person name="Graves T."/>
            <person name="Harmon G."/>
            <person name="Edwards J."/>
            <person name="Latreille P."/>
            <person name="Courtney L."/>
            <person name="Cloud J."/>
            <person name="Abbott A."/>
            <person name="Scott K."/>
            <person name="Johnson D."/>
            <person name="Minx P."/>
            <person name="Bentley D."/>
            <person name="Fulton B."/>
            <person name="Miller N."/>
            <person name="Greco T."/>
            <person name="Kemp K."/>
            <person name="Kramer J."/>
            <person name="Fulton L."/>
            <person name="Mardis E."/>
            <person name="Dante M."/>
            <person name="Pepin K."/>
            <person name="Hillier L.W."/>
            <person name="Nelson J."/>
            <person name="Spieth J."/>
            <person name="Ryan E."/>
            <person name="Andrews S."/>
            <person name="Geisel C."/>
            <person name="Layman D."/>
            <person name="Du H."/>
            <person name="Ali J."/>
            <person name="Berghoff A."/>
            <person name="Jones K."/>
            <person name="Drone K."/>
            <person name="Cotton M."/>
            <person name="Joshu C."/>
            <person name="Antonoiu B."/>
            <person name="Zidanic M."/>
            <person name="Strong C."/>
            <person name="Sun H."/>
            <person name="Lamar B."/>
            <person name="Yordan C."/>
            <person name="Ma P."/>
            <person name="Zhong J."/>
            <person name="Preston R."/>
            <person name="Vil D."/>
            <person name="Shekher M."/>
            <person name="Matero A."/>
            <person name="Shah R."/>
            <person name="Swaby I.K."/>
            <person name="O'Shaughnessy A."/>
            <person name="Rodriguez M."/>
            <person name="Hoffman J."/>
            <person name="Till S."/>
            <person name="Granat S."/>
            <person name="Shohdy N."/>
            <person name="Hasegawa A."/>
            <person name="Hameed A."/>
            <person name="Lodhi M."/>
            <person name="Johnson A."/>
            <person name="Chen E."/>
            <person name="Marra M.A."/>
            <person name="Martienssen R."/>
            <person name="McCombie W.R."/>
        </authorList>
    </citation>
    <scope>NUCLEOTIDE SEQUENCE [LARGE SCALE GENOMIC DNA]</scope>
    <source>
        <strain>cv. Columbia</strain>
    </source>
</reference>
<reference key="2">
    <citation type="journal article" date="2017" name="Plant J.">
        <title>Araport11: a complete reannotation of the Arabidopsis thaliana reference genome.</title>
        <authorList>
            <person name="Cheng C.Y."/>
            <person name="Krishnakumar V."/>
            <person name="Chan A.P."/>
            <person name="Thibaud-Nissen F."/>
            <person name="Schobel S."/>
            <person name="Town C.D."/>
        </authorList>
    </citation>
    <scope>GENOME REANNOTATION</scope>
    <source>
        <strain>cv. Columbia</strain>
    </source>
</reference>
<reference key="3">
    <citation type="journal article" date="2003" name="Science">
        <title>Empirical analysis of transcriptional activity in the Arabidopsis genome.</title>
        <authorList>
            <person name="Yamada K."/>
            <person name="Lim J."/>
            <person name="Dale J.M."/>
            <person name="Chen H."/>
            <person name="Shinn P."/>
            <person name="Palm C.J."/>
            <person name="Southwick A.M."/>
            <person name="Wu H.C."/>
            <person name="Kim C.J."/>
            <person name="Nguyen M."/>
            <person name="Pham P.K."/>
            <person name="Cheuk R.F."/>
            <person name="Karlin-Newmann G."/>
            <person name="Liu S.X."/>
            <person name="Lam B."/>
            <person name="Sakano H."/>
            <person name="Wu T."/>
            <person name="Yu G."/>
            <person name="Miranda M."/>
            <person name="Quach H.L."/>
            <person name="Tripp M."/>
            <person name="Chang C.H."/>
            <person name="Lee J.M."/>
            <person name="Toriumi M.J."/>
            <person name="Chan M.M."/>
            <person name="Tang C.C."/>
            <person name="Onodera C.S."/>
            <person name="Deng J.M."/>
            <person name="Akiyama K."/>
            <person name="Ansari Y."/>
            <person name="Arakawa T."/>
            <person name="Banh J."/>
            <person name="Banno F."/>
            <person name="Bowser L."/>
            <person name="Brooks S.Y."/>
            <person name="Carninci P."/>
            <person name="Chao Q."/>
            <person name="Choy N."/>
            <person name="Enju A."/>
            <person name="Goldsmith A.D."/>
            <person name="Gurjal M."/>
            <person name="Hansen N.F."/>
            <person name="Hayashizaki Y."/>
            <person name="Johnson-Hopson C."/>
            <person name="Hsuan V.W."/>
            <person name="Iida K."/>
            <person name="Karnes M."/>
            <person name="Khan S."/>
            <person name="Koesema E."/>
            <person name="Ishida J."/>
            <person name="Jiang P.X."/>
            <person name="Jones T."/>
            <person name="Kawai J."/>
            <person name="Kamiya A."/>
            <person name="Meyers C."/>
            <person name="Nakajima M."/>
            <person name="Narusaka M."/>
            <person name="Seki M."/>
            <person name="Sakurai T."/>
            <person name="Satou M."/>
            <person name="Tamse R."/>
            <person name="Vaysberg M."/>
            <person name="Wallender E.K."/>
            <person name="Wong C."/>
            <person name="Yamamura Y."/>
            <person name="Yuan S."/>
            <person name="Shinozaki K."/>
            <person name="Davis R.W."/>
            <person name="Theologis A."/>
            <person name="Ecker J.R."/>
        </authorList>
    </citation>
    <scope>NUCLEOTIDE SEQUENCE [LARGE SCALE MRNA]</scope>
    <source>
        <strain>cv. Columbia</strain>
    </source>
</reference>
<reference key="4">
    <citation type="journal article" date="2002" name="Plant Cell Physiol.">
        <title>The XTH family of enzymes involved in xyloglucan endotransglucosylation and endohydrolysis: current perspectives and a new unifying nomenclature.</title>
        <authorList>
            <person name="Rose J.K.C."/>
            <person name="Braam J."/>
            <person name="Fry S.C."/>
            <person name="Nishitani K."/>
        </authorList>
    </citation>
    <scope>NOMENCLATURE</scope>
</reference>
<comment type="function">
    <text evidence="1">Catalyzes xyloglucan endohydrolysis (XEH) and/or endotransglycosylation (XET). Cleaves and religates xyloglucan polymers, an essential constituent of the primary cell wall, and thereby participates in cell wall construction of growing tissues (By similarity).</text>
</comment>
<comment type="catalytic activity">
    <reaction>
        <text>breaks a beta-(1-&gt;4) bond in the backbone of a xyloglucan and transfers the xyloglucanyl segment on to O-4 of the non-reducing terminal glucose residue of an acceptor, which can be a xyloglucan or an oligosaccharide of xyloglucan.</text>
        <dbReference type="EC" id="2.4.1.207"/>
    </reaction>
</comment>
<comment type="subcellular location">
    <subcellularLocation>
        <location evidence="6">Secreted</location>
        <location evidence="6">Cell wall</location>
    </subcellularLocation>
    <subcellularLocation>
        <location evidence="6">Secreted</location>
        <location evidence="6">Extracellular space</location>
        <location evidence="6">Apoplast</location>
    </subcellularLocation>
</comment>
<comment type="PTM">
    <text evidence="1">Contains at least one intrachain disulfide bond essential for its enzymatic activity.</text>
</comment>
<comment type="miscellaneous">
    <text>In contrast to group 1 and group 2 endotransglucosylase/hydrolase proteins, it may not contain the ligase activity, and may catalyze endohydrolysis xyloglucan polymers only.</text>
</comment>
<comment type="similarity">
    <text evidence="6">Belongs to the glycosyl hydrolase 16 family. XTH group 3 subfamily.</text>
</comment>
<comment type="sequence caution" evidence="6">
    <conflict type="erroneous gene model prediction">
        <sequence resource="EMBL-CDS" id="CAA16756"/>
    </conflict>
</comment>
<comment type="sequence caution" evidence="6">
    <conflict type="erroneous gene model prediction">
        <sequence resource="EMBL-CDS" id="CAB78901"/>
    </conflict>
</comment>
<dbReference type="EC" id="2.4.1.207"/>
<dbReference type="EMBL" id="AL021711">
    <property type="protein sequence ID" value="CAA16756.1"/>
    <property type="status" value="ALT_SEQ"/>
    <property type="molecule type" value="Genomic_DNA"/>
</dbReference>
<dbReference type="EMBL" id="AL161549">
    <property type="protein sequence ID" value="CAB78901.1"/>
    <property type="status" value="ALT_SEQ"/>
    <property type="molecule type" value="Genomic_DNA"/>
</dbReference>
<dbReference type="EMBL" id="CP002687">
    <property type="protein sequence ID" value="AEE84120.1"/>
    <property type="molecule type" value="Genomic_DNA"/>
</dbReference>
<dbReference type="EMBL" id="AY133703">
    <property type="protein sequence ID" value="AAM91637.1"/>
    <property type="molecule type" value="mRNA"/>
</dbReference>
<dbReference type="PIR" id="T05036">
    <property type="entry name" value="T05036"/>
</dbReference>
<dbReference type="RefSeq" id="NP_193634.1">
    <property type="nucleotide sequence ID" value="NM_118017.3"/>
</dbReference>
<dbReference type="SMR" id="Q8L7H3"/>
<dbReference type="STRING" id="3702.Q8L7H3"/>
<dbReference type="CAZy" id="GH16">
    <property type="family name" value="Glycoside Hydrolase Family 16"/>
</dbReference>
<dbReference type="GlyCosmos" id="Q8L7H3">
    <property type="glycosylation" value="4 sites, No reported glycans"/>
</dbReference>
<dbReference type="GlyGen" id="Q8L7H3">
    <property type="glycosylation" value="4 sites"/>
</dbReference>
<dbReference type="iPTMnet" id="Q8L7H3"/>
<dbReference type="PaxDb" id="3702-AT4G18990.1"/>
<dbReference type="ProteomicsDB" id="242698"/>
<dbReference type="EnsemblPlants" id="AT4G18990.1">
    <property type="protein sequence ID" value="AT4G18990.1"/>
    <property type="gene ID" value="AT4G18990"/>
</dbReference>
<dbReference type="GeneID" id="827635"/>
<dbReference type="Gramene" id="AT4G18990.1">
    <property type="protein sequence ID" value="AT4G18990.1"/>
    <property type="gene ID" value="AT4G18990"/>
</dbReference>
<dbReference type="KEGG" id="ath:AT4G18990"/>
<dbReference type="Araport" id="AT4G18990"/>
<dbReference type="TAIR" id="AT4G18990">
    <property type="gene designation" value="XTH29"/>
</dbReference>
<dbReference type="eggNOG" id="ENOG502QURN">
    <property type="taxonomic scope" value="Eukaryota"/>
</dbReference>
<dbReference type="HOGENOM" id="CLU_048041_1_2_1"/>
<dbReference type="InParanoid" id="Q8L7H3"/>
<dbReference type="OMA" id="FTNASAC"/>
<dbReference type="PhylomeDB" id="Q8L7H3"/>
<dbReference type="BioCyc" id="ARA:AT4G18990-MONOMER"/>
<dbReference type="PRO" id="PR:Q8L7H3"/>
<dbReference type="Proteomes" id="UP000006548">
    <property type="component" value="Chromosome 4"/>
</dbReference>
<dbReference type="ExpressionAtlas" id="Q8L7H3">
    <property type="expression patterns" value="baseline and differential"/>
</dbReference>
<dbReference type="GO" id="GO:0048046">
    <property type="term" value="C:apoplast"/>
    <property type="evidence" value="ECO:0007669"/>
    <property type="project" value="UniProtKB-SubCell"/>
</dbReference>
<dbReference type="GO" id="GO:0004553">
    <property type="term" value="F:hydrolase activity, hydrolyzing O-glycosyl compounds"/>
    <property type="evidence" value="ECO:0007669"/>
    <property type="project" value="InterPro"/>
</dbReference>
<dbReference type="GO" id="GO:0030247">
    <property type="term" value="F:polysaccharide binding"/>
    <property type="evidence" value="ECO:0000250"/>
    <property type="project" value="UniProtKB"/>
</dbReference>
<dbReference type="GO" id="GO:0016762">
    <property type="term" value="F:xyloglucan:xyloglucosyl transferase activity"/>
    <property type="evidence" value="ECO:0007669"/>
    <property type="project" value="UniProtKB-EC"/>
</dbReference>
<dbReference type="GO" id="GO:0042546">
    <property type="term" value="P:cell wall biogenesis"/>
    <property type="evidence" value="ECO:0007669"/>
    <property type="project" value="InterPro"/>
</dbReference>
<dbReference type="GO" id="GO:0071555">
    <property type="term" value="P:cell wall organization"/>
    <property type="evidence" value="ECO:0007669"/>
    <property type="project" value="UniProtKB-KW"/>
</dbReference>
<dbReference type="GO" id="GO:0010411">
    <property type="term" value="P:xyloglucan metabolic process"/>
    <property type="evidence" value="ECO:0007669"/>
    <property type="project" value="InterPro"/>
</dbReference>
<dbReference type="Gene3D" id="2.60.120.200">
    <property type="match status" value="1"/>
</dbReference>
<dbReference type="InterPro" id="IPR044791">
    <property type="entry name" value="Beta-glucanase/XTH"/>
</dbReference>
<dbReference type="InterPro" id="IPR013320">
    <property type="entry name" value="ConA-like_dom_sf"/>
</dbReference>
<dbReference type="InterPro" id="IPR000757">
    <property type="entry name" value="GH16"/>
</dbReference>
<dbReference type="InterPro" id="IPR010713">
    <property type="entry name" value="XET_C"/>
</dbReference>
<dbReference type="InterPro" id="IPR016455">
    <property type="entry name" value="XTH"/>
</dbReference>
<dbReference type="PANTHER" id="PTHR31062">
    <property type="entry name" value="XYLOGLUCAN ENDOTRANSGLUCOSYLASE/HYDROLASE PROTEIN 8-RELATED"/>
    <property type="match status" value="1"/>
</dbReference>
<dbReference type="Pfam" id="PF00722">
    <property type="entry name" value="Glyco_hydro_16"/>
    <property type="match status" value="1"/>
</dbReference>
<dbReference type="Pfam" id="PF06955">
    <property type="entry name" value="XET_C"/>
    <property type="match status" value="1"/>
</dbReference>
<dbReference type="PIRSF" id="PIRSF005604">
    <property type="entry name" value="XET"/>
    <property type="match status" value="1"/>
</dbReference>
<dbReference type="SUPFAM" id="SSF49899">
    <property type="entry name" value="Concanavalin A-like lectins/glucanases"/>
    <property type="match status" value="1"/>
</dbReference>
<dbReference type="PROSITE" id="PS51762">
    <property type="entry name" value="GH16_2"/>
    <property type="match status" value="1"/>
</dbReference>
<proteinExistence type="evidence at transcript level"/>
<accession>Q8L7H3</accession>
<accession>O49412</accession>
<organism>
    <name type="scientific">Arabidopsis thaliana</name>
    <name type="common">Mouse-ear cress</name>
    <dbReference type="NCBI Taxonomy" id="3702"/>
    <lineage>
        <taxon>Eukaryota</taxon>
        <taxon>Viridiplantae</taxon>
        <taxon>Streptophyta</taxon>
        <taxon>Embryophyta</taxon>
        <taxon>Tracheophyta</taxon>
        <taxon>Spermatophyta</taxon>
        <taxon>Magnoliopsida</taxon>
        <taxon>eudicotyledons</taxon>
        <taxon>Gunneridae</taxon>
        <taxon>Pentapetalae</taxon>
        <taxon>rosids</taxon>
        <taxon>malvids</taxon>
        <taxon>Brassicales</taxon>
        <taxon>Brassicaceae</taxon>
        <taxon>Camelineae</taxon>
        <taxon>Arabidopsis</taxon>
    </lineage>
</organism>
<sequence length="357" mass="41215">MRDSIYLLWIDNRLVVIIMMVMMVSCRCVLGLENINPIFFDEGLSHLFGEGNLIRSPDDRSVRLLLDKYTGSGFISSSMYQHGFFSSLIKLPGAYTAGIVVAFYTSNGDVFVKDHDELDIEFLGNLEGKPWRFQTNMYGNGSTNRGREERYRLWFDPSKEFHRYSILWTPTKIIFWVDDVPIREILRKEEMNGDYPQKPMSLYATIWDASSWATSGGKFGVDYTFSPFVSEFKDIALDGCNVSDSFPGENNNNNIGNYNNINCSVSDQFLMSNDYSTISPKQATAMRRFRERYMYYSYCYDTIRYSVPPPECVIVTAEKNRFRDTGRLKFGGSHPKVHKARKKRRRNRSTPVVSADL</sequence>
<gene>
    <name type="primary">XTH29</name>
    <name type="synonym">XTR13</name>
    <name type="ordered locus">At4g18990</name>
    <name type="ORF">F13C5.160</name>
</gene>